<comment type="function">
    <text evidence="1">Murein-degrading enzyme that degrades murein glycan strands and insoluble, high-molecular weight murein sacculi, with the concomitant formation of a 1,6-anhydromuramoyl product. Lytic transglycosylases (LTs) play an integral role in the metabolism of the peptidoglycan (PG) sacculus. Their lytic action creates space within the PG sacculus to allow for its expansion as well as for the insertion of various structures such as secretion systems and flagella.</text>
</comment>
<comment type="catalytic activity">
    <reaction evidence="1">
        <text>Exolytic cleavage of the (1-&gt;4)-beta-glycosidic linkage between N-acetylmuramic acid (MurNAc) and N-acetylglucosamine (GlcNAc) residues in peptidoglycan, from either the reducing or the non-reducing ends of the peptidoglycan chains, with concomitant formation of a 1,6-anhydrobond in the MurNAc residue.</text>
        <dbReference type="EC" id="4.2.2.n1"/>
    </reaction>
</comment>
<comment type="subcellular location">
    <subcellularLocation>
        <location>Cell outer membrane</location>
        <topology>Peripheral membrane protein</topology>
    </subcellularLocation>
    <text evidence="1">Attached to the inner leaflet of the outer membrane.</text>
</comment>
<comment type="domain">
    <text evidence="1">The N-terminal domain does not have lytic activity and probably modulates enzymatic activity. The C-terminal domain is the catalytic active domain.</text>
</comment>
<comment type="similarity">
    <text evidence="1">In the N-terminal section; belongs to the bacterial solute-binding protein 3 family.</text>
</comment>
<comment type="similarity">
    <text evidence="1">In the C-terminal section; belongs to the transglycosylase Slt family.</text>
</comment>
<protein>
    <recommendedName>
        <fullName evidence="1">Membrane-bound lytic murein transglycosylase F</fullName>
        <ecNumber evidence="1">4.2.2.n1</ecNumber>
    </recommendedName>
    <alternativeName>
        <fullName evidence="1">Murein lyase F</fullName>
    </alternativeName>
</protein>
<organism>
    <name type="scientific">Salmonella paratyphi A (strain ATCC 9150 / SARB42)</name>
    <dbReference type="NCBI Taxonomy" id="295319"/>
    <lineage>
        <taxon>Bacteria</taxon>
        <taxon>Pseudomonadati</taxon>
        <taxon>Pseudomonadota</taxon>
        <taxon>Gammaproteobacteria</taxon>
        <taxon>Enterobacterales</taxon>
        <taxon>Enterobacteriaceae</taxon>
        <taxon>Salmonella</taxon>
    </lineage>
</organism>
<dbReference type="EC" id="4.2.2.n1" evidence="1"/>
<dbReference type="EMBL" id="CP000026">
    <property type="protein sequence ID" value="AAV76319.1"/>
    <property type="molecule type" value="Genomic_DNA"/>
</dbReference>
<dbReference type="RefSeq" id="WP_000734245.1">
    <property type="nucleotide sequence ID" value="NC_006511.1"/>
</dbReference>
<dbReference type="SMR" id="Q5PIH0"/>
<dbReference type="CAZy" id="GH23">
    <property type="family name" value="Glycoside Hydrolase Family 23"/>
</dbReference>
<dbReference type="KEGG" id="spt:SPA0298"/>
<dbReference type="HOGENOM" id="CLU_027494_0_1_6"/>
<dbReference type="Proteomes" id="UP000008185">
    <property type="component" value="Chromosome"/>
</dbReference>
<dbReference type="GO" id="GO:0009279">
    <property type="term" value="C:cell outer membrane"/>
    <property type="evidence" value="ECO:0007669"/>
    <property type="project" value="UniProtKB-SubCell"/>
</dbReference>
<dbReference type="GO" id="GO:0008933">
    <property type="term" value="F:peptidoglycan lytic transglycosylase activity"/>
    <property type="evidence" value="ECO:0007669"/>
    <property type="project" value="UniProtKB-UniRule"/>
</dbReference>
<dbReference type="GO" id="GO:0016998">
    <property type="term" value="P:cell wall macromolecule catabolic process"/>
    <property type="evidence" value="ECO:0007669"/>
    <property type="project" value="UniProtKB-UniRule"/>
</dbReference>
<dbReference type="GO" id="GO:0071555">
    <property type="term" value="P:cell wall organization"/>
    <property type="evidence" value="ECO:0007669"/>
    <property type="project" value="UniProtKB-KW"/>
</dbReference>
<dbReference type="GO" id="GO:0009253">
    <property type="term" value="P:peptidoglycan catabolic process"/>
    <property type="evidence" value="ECO:0007669"/>
    <property type="project" value="TreeGrafter"/>
</dbReference>
<dbReference type="CDD" id="cd13403">
    <property type="entry name" value="MLTF-like"/>
    <property type="match status" value="1"/>
</dbReference>
<dbReference type="CDD" id="cd01009">
    <property type="entry name" value="PBP2_YfhD_N"/>
    <property type="match status" value="1"/>
</dbReference>
<dbReference type="FunFam" id="1.10.530.10:FF:000003">
    <property type="entry name" value="Membrane-bound lytic murein transglycosylase F"/>
    <property type="match status" value="1"/>
</dbReference>
<dbReference type="FunFam" id="3.40.190.10:FF:000051">
    <property type="entry name" value="Membrane-bound lytic murein transglycosylase F"/>
    <property type="match status" value="1"/>
</dbReference>
<dbReference type="Gene3D" id="1.10.530.10">
    <property type="match status" value="1"/>
</dbReference>
<dbReference type="Gene3D" id="3.40.190.10">
    <property type="entry name" value="Periplasmic binding protein-like II"/>
    <property type="match status" value="2"/>
</dbReference>
<dbReference type="HAMAP" id="MF_02016">
    <property type="entry name" value="MltF"/>
    <property type="match status" value="1"/>
</dbReference>
<dbReference type="InterPro" id="IPR023346">
    <property type="entry name" value="Lysozyme-like_dom_sf"/>
</dbReference>
<dbReference type="InterPro" id="IPR023703">
    <property type="entry name" value="MltF"/>
</dbReference>
<dbReference type="InterPro" id="IPR001638">
    <property type="entry name" value="Solute-binding_3/MltF_N"/>
</dbReference>
<dbReference type="InterPro" id="IPR000189">
    <property type="entry name" value="Transglyc_AS"/>
</dbReference>
<dbReference type="InterPro" id="IPR008258">
    <property type="entry name" value="Transglycosylase_SLT_dom_1"/>
</dbReference>
<dbReference type="NCBIfam" id="NF008112">
    <property type="entry name" value="PRK10859.1"/>
    <property type="match status" value="1"/>
</dbReference>
<dbReference type="PANTHER" id="PTHR35936">
    <property type="entry name" value="MEMBRANE-BOUND LYTIC MUREIN TRANSGLYCOSYLASE F"/>
    <property type="match status" value="1"/>
</dbReference>
<dbReference type="PANTHER" id="PTHR35936:SF32">
    <property type="entry name" value="MEMBRANE-BOUND LYTIC MUREIN TRANSGLYCOSYLASE F"/>
    <property type="match status" value="1"/>
</dbReference>
<dbReference type="Pfam" id="PF00497">
    <property type="entry name" value="SBP_bac_3"/>
    <property type="match status" value="1"/>
</dbReference>
<dbReference type="Pfam" id="PF01464">
    <property type="entry name" value="SLT"/>
    <property type="match status" value="1"/>
</dbReference>
<dbReference type="SMART" id="SM00062">
    <property type="entry name" value="PBPb"/>
    <property type="match status" value="1"/>
</dbReference>
<dbReference type="SUPFAM" id="SSF53955">
    <property type="entry name" value="Lysozyme-like"/>
    <property type="match status" value="1"/>
</dbReference>
<dbReference type="SUPFAM" id="SSF53850">
    <property type="entry name" value="Periplasmic binding protein-like II"/>
    <property type="match status" value="1"/>
</dbReference>
<dbReference type="PROSITE" id="PS00922">
    <property type="entry name" value="TRANSGLYCOSYLASE"/>
    <property type="match status" value="1"/>
</dbReference>
<keyword id="KW-0998">Cell outer membrane</keyword>
<keyword id="KW-0961">Cell wall biogenesis/degradation</keyword>
<keyword id="KW-0456">Lyase</keyword>
<keyword id="KW-0472">Membrane</keyword>
<keyword id="KW-0732">Signal</keyword>
<proteinExistence type="inferred from homology"/>
<reference key="1">
    <citation type="journal article" date="2004" name="Nat. Genet.">
        <title>Comparison of genome degradation in Paratyphi A and Typhi, human-restricted serovars of Salmonella enterica that cause typhoid.</title>
        <authorList>
            <person name="McClelland M."/>
            <person name="Sanderson K.E."/>
            <person name="Clifton S.W."/>
            <person name="Latreille P."/>
            <person name="Porwollik S."/>
            <person name="Sabo A."/>
            <person name="Meyer R."/>
            <person name="Bieri T."/>
            <person name="Ozersky P."/>
            <person name="McLellan M."/>
            <person name="Harkins C.R."/>
            <person name="Wang C."/>
            <person name="Nguyen C."/>
            <person name="Berghoff A."/>
            <person name="Elliott G."/>
            <person name="Kohlberg S."/>
            <person name="Strong C."/>
            <person name="Du F."/>
            <person name="Carter J."/>
            <person name="Kremizki C."/>
            <person name="Layman D."/>
            <person name="Leonard S."/>
            <person name="Sun H."/>
            <person name="Fulton L."/>
            <person name="Nash W."/>
            <person name="Miner T."/>
            <person name="Minx P."/>
            <person name="Delehaunty K."/>
            <person name="Fronick C."/>
            <person name="Magrini V."/>
            <person name="Nhan M."/>
            <person name="Warren W."/>
            <person name="Florea L."/>
            <person name="Spieth J."/>
            <person name="Wilson R.K."/>
        </authorList>
    </citation>
    <scope>NUCLEOTIDE SEQUENCE [LARGE SCALE GENOMIC DNA]</scope>
    <source>
        <strain>ATCC 9150 / SARB42</strain>
    </source>
</reference>
<sequence>MKKLKINYLFIGILTLLLAAALWPSIPWFGKTENHIAAIQARGVLRVSTIDSPLTYSVINGKKYGLDYELAQQFANYLGVKLKVTVRQNISQLFDDLDNGNADLLAAGLVYDSARVKNYQPGPMYYSVSQQLVYRVGQYRPRSLATVNENQLTIAPGHVVVNDLQRLKETKFPDLSWKVDDKKGSTTLLEEVISGKLDYTIADSVAIGLFQRVHPELAVALDVTDEQPVTWFSRLDDNNTLSAALLDFFNSINEDGSLARIEEKYLGHGDDFDYVDTRSFLRAVDNVLPELEPLFKKYAKEIDWRLLAAISYQESHWDPLATSPTGVRGLMMLTKNTAQSLGLTDRTDAEQSISGGARYLEDMMAKVPETVPEDERIWFALAAYNMGYAHMLDARSLTVKTKGNPDSWTDVKQRLPLLSQKPYYSKLTYGYARGHEAYAYVENIRKYQISLVGYLQEKEKQEAEAMKLAQDYPAVSPEELNKAPFPLLSFLSQSSGYLTHSPSLLFTPQKKEEK</sequence>
<gene>
    <name evidence="1" type="primary">mltF</name>
    <name type="ordered locus">SPA0298</name>
</gene>
<name>MLTF_SALPA</name>
<accession>Q5PIH0</accession>
<evidence type="ECO:0000255" key="1">
    <source>
        <dbReference type="HAMAP-Rule" id="MF_02016"/>
    </source>
</evidence>
<feature type="signal peptide" evidence="1">
    <location>
        <begin position="1"/>
        <end position="30"/>
    </location>
</feature>
<feature type="chain" id="PRO_0000353972" description="Membrane-bound lytic murein transglycosylase F">
    <location>
        <begin position="31"/>
        <end position="514"/>
    </location>
</feature>
<feature type="region of interest" description="Non-LT domain" evidence="1">
    <location>
        <begin position="31"/>
        <end position="269"/>
    </location>
</feature>
<feature type="region of interest" description="LT domain" evidence="1">
    <location>
        <begin position="270"/>
        <end position="514"/>
    </location>
</feature>
<feature type="active site" evidence="1">
    <location>
        <position position="314"/>
    </location>
</feature>